<sequence>MLLLLYICCLFLKFILANVDLTFVEYAKLPSKYAELLANATNQQGVMLFSTGDIRIGAYNYLVNNVTEINNDTDAYLCQLLTGQYTTDCYIFDTNSDDKPETFNSSIHLLNSDLDPK</sequence>
<gene>
    <name type="ORF">SPAPJ695.01c</name>
</gene>
<reference key="1">
    <citation type="journal article" date="2002" name="Nature">
        <title>The genome sequence of Schizosaccharomyces pombe.</title>
        <authorList>
            <person name="Wood V."/>
            <person name="Gwilliam R."/>
            <person name="Rajandream M.A."/>
            <person name="Lyne M.H."/>
            <person name="Lyne R."/>
            <person name="Stewart A."/>
            <person name="Sgouros J.G."/>
            <person name="Peat N."/>
            <person name="Hayles J."/>
            <person name="Baker S.G."/>
            <person name="Basham D."/>
            <person name="Bowman S."/>
            <person name="Brooks K."/>
            <person name="Brown D."/>
            <person name="Brown S."/>
            <person name="Chillingworth T."/>
            <person name="Churcher C.M."/>
            <person name="Collins M."/>
            <person name="Connor R."/>
            <person name="Cronin A."/>
            <person name="Davis P."/>
            <person name="Feltwell T."/>
            <person name="Fraser A."/>
            <person name="Gentles S."/>
            <person name="Goble A."/>
            <person name="Hamlin N."/>
            <person name="Harris D.E."/>
            <person name="Hidalgo J."/>
            <person name="Hodgson G."/>
            <person name="Holroyd S."/>
            <person name="Hornsby T."/>
            <person name="Howarth S."/>
            <person name="Huckle E.J."/>
            <person name="Hunt S."/>
            <person name="Jagels K."/>
            <person name="James K.D."/>
            <person name="Jones L."/>
            <person name="Jones M."/>
            <person name="Leather S."/>
            <person name="McDonald S."/>
            <person name="McLean J."/>
            <person name="Mooney P."/>
            <person name="Moule S."/>
            <person name="Mungall K.L."/>
            <person name="Murphy L.D."/>
            <person name="Niblett D."/>
            <person name="Odell C."/>
            <person name="Oliver K."/>
            <person name="O'Neil S."/>
            <person name="Pearson D."/>
            <person name="Quail M.A."/>
            <person name="Rabbinowitsch E."/>
            <person name="Rutherford K.M."/>
            <person name="Rutter S."/>
            <person name="Saunders D."/>
            <person name="Seeger K."/>
            <person name="Sharp S."/>
            <person name="Skelton J."/>
            <person name="Simmonds M.N."/>
            <person name="Squares R."/>
            <person name="Squares S."/>
            <person name="Stevens K."/>
            <person name="Taylor K."/>
            <person name="Taylor R.G."/>
            <person name="Tivey A."/>
            <person name="Walsh S.V."/>
            <person name="Warren T."/>
            <person name="Whitehead S."/>
            <person name="Woodward J.R."/>
            <person name="Volckaert G."/>
            <person name="Aert R."/>
            <person name="Robben J."/>
            <person name="Grymonprez B."/>
            <person name="Weltjens I."/>
            <person name="Vanstreels E."/>
            <person name="Rieger M."/>
            <person name="Schaefer M."/>
            <person name="Mueller-Auer S."/>
            <person name="Gabel C."/>
            <person name="Fuchs M."/>
            <person name="Duesterhoeft A."/>
            <person name="Fritzc C."/>
            <person name="Holzer E."/>
            <person name="Moestl D."/>
            <person name="Hilbert H."/>
            <person name="Borzym K."/>
            <person name="Langer I."/>
            <person name="Beck A."/>
            <person name="Lehrach H."/>
            <person name="Reinhardt R."/>
            <person name="Pohl T.M."/>
            <person name="Eger P."/>
            <person name="Zimmermann W."/>
            <person name="Wedler H."/>
            <person name="Wambutt R."/>
            <person name="Purnelle B."/>
            <person name="Goffeau A."/>
            <person name="Cadieu E."/>
            <person name="Dreano S."/>
            <person name="Gloux S."/>
            <person name="Lelaure V."/>
            <person name="Mottier S."/>
            <person name="Galibert F."/>
            <person name="Aves S.J."/>
            <person name="Xiang Z."/>
            <person name="Hunt C."/>
            <person name="Moore K."/>
            <person name="Hurst S.M."/>
            <person name="Lucas M."/>
            <person name="Rochet M."/>
            <person name="Gaillardin C."/>
            <person name="Tallada V.A."/>
            <person name="Garzon A."/>
            <person name="Thode G."/>
            <person name="Daga R.R."/>
            <person name="Cruzado L."/>
            <person name="Jimenez J."/>
            <person name="Sanchez M."/>
            <person name="del Rey F."/>
            <person name="Benito J."/>
            <person name="Dominguez A."/>
            <person name="Revuelta J.L."/>
            <person name="Moreno S."/>
            <person name="Armstrong J."/>
            <person name="Forsburg S.L."/>
            <person name="Cerutti L."/>
            <person name="Lowe T."/>
            <person name="McCombie W.R."/>
            <person name="Paulsen I."/>
            <person name="Potashkin J."/>
            <person name="Shpakovski G.V."/>
            <person name="Ussery D."/>
            <person name="Barrell B.G."/>
            <person name="Nurse P."/>
        </authorList>
    </citation>
    <scope>NUCLEOTIDE SEQUENCE [LARGE SCALE GENOMIC DNA]</scope>
    <source>
        <strain>972 / ATCC 24843</strain>
    </source>
</reference>
<evidence type="ECO:0000255" key="1"/>
<evidence type="ECO:0000305" key="2"/>
<protein>
    <recommendedName>
        <fullName>UPF0321 protein PJ695.01c</fullName>
    </recommendedName>
</protein>
<keyword id="KW-0325">Glycoprotein</keyword>
<keyword id="KW-1185">Reference proteome</keyword>
<keyword id="KW-0732">Signal</keyword>
<accession>Q9URW1</accession>
<dbReference type="EMBL" id="CU329670">
    <property type="protein sequence ID" value="CAB61210.1"/>
    <property type="molecule type" value="Genomic_DNA"/>
</dbReference>
<dbReference type="PIR" id="T50294">
    <property type="entry name" value="T50294"/>
</dbReference>
<dbReference type="RefSeq" id="NP_592789.1">
    <property type="nucleotide sequence ID" value="NM_001018189.2"/>
</dbReference>
<dbReference type="BioGRID" id="279744">
    <property type="interactions" value="47"/>
</dbReference>
<dbReference type="STRING" id="284812.Q9URW1"/>
<dbReference type="PaxDb" id="4896-SPAPJ695.01c.1"/>
<dbReference type="EnsemblFungi" id="SPAPJ695.01c.1">
    <property type="protein sequence ID" value="SPAPJ695.01c.1:pep"/>
    <property type="gene ID" value="SPAPJ695.01c"/>
</dbReference>
<dbReference type="KEGG" id="spo:2543320"/>
<dbReference type="PomBase" id="SPAPJ695.01c"/>
<dbReference type="VEuPathDB" id="FungiDB:SPAPJ695.01c"/>
<dbReference type="HOGENOM" id="CLU_2086172_0_0_1"/>
<dbReference type="InParanoid" id="Q9URW1"/>
<dbReference type="PhylomeDB" id="Q9URW1"/>
<dbReference type="PRO" id="PR:Q9URW1"/>
<dbReference type="Proteomes" id="UP000002485">
    <property type="component" value="Chromosome I"/>
</dbReference>
<dbReference type="GO" id="GO:0005737">
    <property type="term" value="C:cytoplasm"/>
    <property type="evidence" value="ECO:0007005"/>
    <property type="project" value="PomBase"/>
</dbReference>
<dbReference type="InterPro" id="IPR019445">
    <property type="entry name" value="UPF0321"/>
</dbReference>
<dbReference type="Pfam" id="PF10353">
    <property type="entry name" value="DUF2430"/>
    <property type="match status" value="1"/>
</dbReference>
<proteinExistence type="inferred from homology"/>
<organism>
    <name type="scientific">Schizosaccharomyces pombe (strain 972 / ATCC 24843)</name>
    <name type="common">Fission yeast</name>
    <dbReference type="NCBI Taxonomy" id="284812"/>
    <lineage>
        <taxon>Eukaryota</taxon>
        <taxon>Fungi</taxon>
        <taxon>Dikarya</taxon>
        <taxon>Ascomycota</taxon>
        <taxon>Taphrinomycotina</taxon>
        <taxon>Schizosaccharomycetes</taxon>
        <taxon>Schizosaccharomycetales</taxon>
        <taxon>Schizosaccharomycetaceae</taxon>
        <taxon>Schizosaccharomyces</taxon>
    </lineage>
</organism>
<feature type="signal peptide" evidence="1">
    <location>
        <begin position="1"/>
        <end position="17"/>
    </location>
</feature>
<feature type="chain" id="PRO_0000036320" description="UPF0321 protein PJ695.01c">
    <location>
        <begin position="18"/>
        <end position="117"/>
    </location>
</feature>
<feature type="glycosylation site" description="N-linked (GlcNAc...) asparagine" evidence="1">
    <location>
        <position position="39"/>
    </location>
</feature>
<feature type="glycosylation site" description="N-linked (GlcNAc...) asparagine" evidence="1">
    <location>
        <position position="65"/>
    </location>
</feature>
<feature type="glycosylation site" description="N-linked (GlcNAc...) asparagine" evidence="1">
    <location>
        <position position="71"/>
    </location>
</feature>
<feature type="glycosylation site" description="N-linked (GlcNAc...) asparagine" evidence="1">
    <location>
        <position position="104"/>
    </location>
</feature>
<comment type="similarity">
    <text evidence="2">Belongs to the UPF0321 family.</text>
</comment>
<name>YI81_SCHPO</name>